<name>DDX1_XENLA</name>
<feature type="chain" id="PRO_0000312360" description="ATP-dependent RNA helicase DDX1">
    <location>
        <begin position="1"/>
        <end position="740"/>
    </location>
</feature>
<feature type="domain" description="Helicase ATP-binding" evidence="3">
    <location>
        <begin position="2"/>
        <end position="428"/>
    </location>
</feature>
<feature type="domain" description="B30.2/SPRY" evidence="5">
    <location>
        <begin position="70"/>
        <end position="247"/>
    </location>
</feature>
<feature type="domain" description="Helicase C-terminal" evidence="4">
    <location>
        <begin position="493"/>
        <end position="681"/>
    </location>
</feature>
<feature type="region of interest" description="Interaction with dsRNA" evidence="1">
    <location>
        <begin position="1"/>
        <end position="448"/>
    </location>
</feature>
<feature type="short sequence motif" description="DEAD box" evidence="3">
    <location>
        <begin position="370"/>
        <end position="373"/>
    </location>
</feature>
<feature type="binding site" evidence="3">
    <location>
        <begin position="46"/>
        <end position="53"/>
    </location>
    <ligand>
        <name>ATP</name>
        <dbReference type="ChEBI" id="CHEBI:30616"/>
    </ligand>
</feature>
<dbReference type="EC" id="3.6.4.13"/>
<dbReference type="EMBL" id="BC129617">
    <property type="protein sequence ID" value="AAI29618.1"/>
    <property type="molecule type" value="mRNA"/>
</dbReference>
<dbReference type="RefSeq" id="NP_001091352.1">
    <property type="nucleotide sequence ID" value="NM_001097883.1"/>
</dbReference>
<dbReference type="SMR" id="A2VD92"/>
<dbReference type="BioGRID" id="674470">
    <property type="interactions" value="2"/>
</dbReference>
<dbReference type="IntAct" id="A2VD92">
    <property type="interactions" value="2"/>
</dbReference>
<dbReference type="DNASU" id="100037192"/>
<dbReference type="GeneID" id="100037192"/>
<dbReference type="KEGG" id="xla:100037192"/>
<dbReference type="AGR" id="Xenbase:XB-GENE-969102"/>
<dbReference type="CTD" id="100037192"/>
<dbReference type="Xenbase" id="XB-GENE-969102">
    <property type="gene designation" value="ddx1.L"/>
</dbReference>
<dbReference type="OMA" id="KRQQVKF"/>
<dbReference type="OrthoDB" id="1735at2759"/>
<dbReference type="CD-CODE" id="78E86D56">
    <property type="entry name" value="Mitochondrial cloud"/>
</dbReference>
<dbReference type="Proteomes" id="UP000186698">
    <property type="component" value="Chromosome 5L"/>
</dbReference>
<dbReference type="Bgee" id="100037192">
    <property type="expression patterns" value="Expressed in muscle tissue and 19 other cell types or tissues"/>
</dbReference>
<dbReference type="GO" id="GO:0005737">
    <property type="term" value="C:cytoplasm"/>
    <property type="evidence" value="ECO:0000250"/>
    <property type="project" value="UniProtKB"/>
</dbReference>
<dbReference type="GO" id="GO:0005829">
    <property type="term" value="C:cytosol"/>
    <property type="evidence" value="ECO:0000250"/>
    <property type="project" value="UniProtKB"/>
</dbReference>
<dbReference type="GO" id="GO:0005739">
    <property type="term" value="C:mitochondrion"/>
    <property type="evidence" value="ECO:0000250"/>
    <property type="project" value="UniProtKB"/>
</dbReference>
<dbReference type="GO" id="GO:0005730">
    <property type="term" value="C:nucleolus"/>
    <property type="evidence" value="ECO:0000318"/>
    <property type="project" value="GO_Central"/>
</dbReference>
<dbReference type="GO" id="GO:0005634">
    <property type="term" value="C:nucleus"/>
    <property type="evidence" value="ECO:0000250"/>
    <property type="project" value="UniProtKB"/>
</dbReference>
<dbReference type="GO" id="GO:0072669">
    <property type="term" value="C:tRNA-splicing ligase complex"/>
    <property type="evidence" value="ECO:0000250"/>
    <property type="project" value="UniProtKB"/>
</dbReference>
<dbReference type="GO" id="GO:0005524">
    <property type="term" value="F:ATP binding"/>
    <property type="evidence" value="ECO:0007669"/>
    <property type="project" value="UniProtKB-KW"/>
</dbReference>
<dbReference type="GO" id="GO:0016887">
    <property type="term" value="F:ATP hydrolysis activity"/>
    <property type="evidence" value="ECO:0007669"/>
    <property type="project" value="RHEA"/>
</dbReference>
<dbReference type="GO" id="GO:0003682">
    <property type="term" value="F:chromatin binding"/>
    <property type="evidence" value="ECO:0000250"/>
    <property type="project" value="UniProtKB"/>
</dbReference>
<dbReference type="GO" id="GO:0003677">
    <property type="term" value="F:DNA binding"/>
    <property type="evidence" value="ECO:0007669"/>
    <property type="project" value="UniProtKB-KW"/>
</dbReference>
<dbReference type="GO" id="GO:0033677">
    <property type="term" value="F:DNA/RNA helicase activity"/>
    <property type="evidence" value="ECO:0000250"/>
    <property type="project" value="UniProtKB"/>
</dbReference>
<dbReference type="GO" id="GO:0004527">
    <property type="term" value="F:exonuclease activity"/>
    <property type="evidence" value="ECO:0007669"/>
    <property type="project" value="UniProtKB-KW"/>
</dbReference>
<dbReference type="GO" id="GO:0003729">
    <property type="term" value="F:mRNA binding"/>
    <property type="evidence" value="ECO:0000318"/>
    <property type="project" value="GO_Central"/>
</dbReference>
<dbReference type="GO" id="GO:0004518">
    <property type="term" value="F:nuclease activity"/>
    <property type="evidence" value="ECO:0000250"/>
    <property type="project" value="UniProtKB"/>
</dbReference>
<dbReference type="GO" id="GO:0008143">
    <property type="term" value="F:poly(A) binding"/>
    <property type="evidence" value="ECO:0000250"/>
    <property type="project" value="UniProtKB"/>
</dbReference>
<dbReference type="GO" id="GO:0003724">
    <property type="term" value="F:RNA helicase activity"/>
    <property type="evidence" value="ECO:0000250"/>
    <property type="project" value="UniProtKB"/>
</dbReference>
<dbReference type="GO" id="GO:0003712">
    <property type="term" value="F:transcription coregulator activity"/>
    <property type="evidence" value="ECO:0000250"/>
    <property type="project" value="UniProtKB"/>
</dbReference>
<dbReference type="GO" id="GO:0006302">
    <property type="term" value="P:double-strand break repair"/>
    <property type="evidence" value="ECO:0000250"/>
    <property type="project" value="UniProtKB"/>
</dbReference>
<dbReference type="GO" id="GO:0006397">
    <property type="term" value="P:mRNA processing"/>
    <property type="evidence" value="ECO:0007669"/>
    <property type="project" value="UniProtKB-KW"/>
</dbReference>
<dbReference type="GO" id="GO:0006364">
    <property type="term" value="P:rRNA processing"/>
    <property type="evidence" value="ECO:0000318"/>
    <property type="project" value="GO_Central"/>
</dbReference>
<dbReference type="GO" id="GO:0006388">
    <property type="term" value="P:tRNA splicing, via endonucleolytic cleavage and ligation"/>
    <property type="evidence" value="ECO:0000250"/>
    <property type="project" value="UniProtKB"/>
</dbReference>
<dbReference type="CDD" id="cd17938">
    <property type="entry name" value="DEADc_DDX1"/>
    <property type="match status" value="1"/>
</dbReference>
<dbReference type="CDD" id="cd18787">
    <property type="entry name" value="SF2_C_DEAD"/>
    <property type="match status" value="1"/>
</dbReference>
<dbReference type="CDD" id="cd12873">
    <property type="entry name" value="SPRY_DDX1"/>
    <property type="match status" value="1"/>
</dbReference>
<dbReference type="FunFam" id="2.60.120.920:FF:000013">
    <property type="entry name" value="ATP-dependent RNA helicase DDX1"/>
    <property type="match status" value="1"/>
</dbReference>
<dbReference type="FunFam" id="3.40.50.300:FF:000652">
    <property type="entry name" value="ATP-dependent RNA helicase DDX1"/>
    <property type="match status" value="1"/>
</dbReference>
<dbReference type="FunFam" id="3.40.50.300:FF:000708">
    <property type="entry name" value="ATP-dependent RNA helicase DDX1"/>
    <property type="match status" value="1"/>
</dbReference>
<dbReference type="FunFam" id="3.40.50.300:FF:000716">
    <property type="entry name" value="ATP-dependent RNA helicase DDX1"/>
    <property type="match status" value="1"/>
</dbReference>
<dbReference type="Gene3D" id="2.60.120.920">
    <property type="match status" value="1"/>
</dbReference>
<dbReference type="Gene3D" id="3.40.50.300">
    <property type="entry name" value="P-loop containing nucleotide triphosphate hydrolases"/>
    <property type="match status" value="3"/>
</dbReference>
<dbReference type="InterPro" id="IPR001870">
    <property type="entry name" value="B30.2/SPRY"/>
</dbReference>
<dbReference type="InterPro" id="IPR043136">
    <property type="entry name" value="B30.2/SPRY_sf"/>
</dbReference>
<dbReference type="InterPro" id="IPR013320">
    <property type="entry name" value="ConA-like_dom_sf"/>
</dbReference>
<dbReference type="InterPro" id="IPR011545">
    <property type="entry name" value="DEAD/DEAH_box_helicase_dom"/>
</dbReference>
<dbReference type="InterPro" id="IPR014001">
    <property type="entry name" value="Helicase_ATP-bd"/>
</dbReference>
<dbReference type="InterPro" id="IPR001650">
    <property type="entry name" value="Helicase_C-like"/>
</dbReference>
<dbReference type="InterPro" id="IPR027417">
    <property type="entry name" value="P-loop_NTPase"/>
</dbReference>
<dbReference type="InterPro" id="IPR014014">
    <property type="entry name" value="RNA_helicase_DEAD_Q_motif"/>
</dbReference>
<dbReference type="InterPro" id="IPR003877">
    <property type="entry name" value="SPRY_dom"/>
</dbReference>
<dbReference type="PANTHER" id="PTHR24031">
    <property type="entry name" value="RNA HELICASE"/>
    <property type="match status" value="1"/>
</dbReference>
<dbReference type="Pfam" id="PF00270">
    <property type="entry name" value="DEAD"/>
    <property type="match status" value="2"/>
</dbReference>
<dbReference type="Pfam" id="PF00271">
    <property type="entry name" value="Helicase_C"/>
    <property type="match status" value="1"/>
</dbReference>
<dbReference type="Pfam" id="PF00622">
    <property type="entry name" value="SPRY"/>
    <property type="match status" value="1"/>
</dbReference>
<dbReference type="SMART" id="SM00487">
    <property type="entry name" value="DEXDc"/>
    <property type="match status" value="1"/>
</dbReference>
<dbReference type="SMART" id="SM00490">
    <property type="entry name" value="HELICc"/>
    <property type="match status" value="1"/>
</dbReference>
<dbReference type="SMART" id="SM00449">
    <property type="entry name" value="SPRY"/>
    <property type="match status" value="1"/>
</dbReference>
<dbReference type="SUPFAM" id="SSF49899">
    <property type="entry name" value="Concanavalin A-like lectins/glucanases"/>
    <property type="match status" value="1"/>
</dbReference>
<dbReference type="SUPFAM" id="SSF52540">
    <property type="entry name" value="P-loop containing nucleoside triphosphate hydrolases"/>
    <property type="match status" value="2"/>
</dbReference>
<dbReference type="PROSITE" id="PS50188">
    <property type="entry name" value="B302_SPRY"/>
    <property type="match status" value="1"/>
</dbReference>
<dbReference type="PROSITE" id="PS51192">
    <property type="entry name" value="HELICASE_ATP_BIND_1"/>
    <property type="match status" value="2"/>
</dbReference>
<dbReference type="PROSITE" id="PS51194">
    <property type="entry name" value="HELICASE_CTER"/>
    <property type="match status" value="1"/>
</dbReference>
<dbReference type="PROSITE" id="PS51195">
    <property type="entry name" value="Q_MOTIF"/>
    <property type="match status" value="1"/>
</dbReference>
<reference key="1">
    <citation type="submission" date="2006-12" db="EMBL/GenBank/DDBJ databases">
        <authorList>
            <consortium name="NIH - Xenopus Gene Collection (XGC) project"/>
        </authorList>
    </citation>
    <scope>NUCLEOTIDE SEQUENCE [LARGE SCALE MRNA]</scope>
    <source>
        <tissue>Intestine</tissue>
    </source>
</reference>
<accession>A2VD92</accession>
<evidence type="ECO:0000250" key="1">
    <source>
        <dbReference type="UniProtKB" id="Q91VR5"/>
    </source>
</evidence>
<evidence type="ECO:0000250" key="2">
    <source>
        <dbReference type="UniProtKB" id="Q92499"/>
    </source>
</evidence>
<evidence type="ECO:0000255" key="3">
    <source>
        <dbReference type="PROSITE-ProRule" id="PRU00541"/>
    </source>
</evidence>
<evidence type="ECO:0000255" key="4">
    <source>
        <dbReference type="PROSITE-ProRule" id="PRU00542"/>
    </source>
</evidence>
<evidence type="ECO:0000255" key="5">
    <source>
        <dbReference type="PROSITE-ProRule" id="PRU00548"/>
    </source>
</evidence>
<evidence type="ECO:0000305" key="6"/>
<comment type="function">
    <text evidence="1 2">Acts as an ATP-dependent RNA helicase, able to unwind both RNA-RNA and RNA-DNA duplexes. Possesses 5' single-stranded RNA overhang nuclease activity. Acts as a positive regulator of transcription. May be involved in 3'-end cleavage and polyadenylation of pre-mRNAs. Binds DNA and RNA. Component of the tRNA-splicing ligase complex required to facilitate the enzymatic turnover of catalytic subunit rtcb (By similarity). Binds (via helicase ATP-binding domain) on both short and long poly(I:C) dsRNA (By similarity).</text>
</comment>
<comment type="catalytic activity">
    <reaction>
        <text>ATP + H2O = ADP + phosphate + H(+)</text>
        <dbReference type="Rhea" id="RHEA:13065"/>
        <dbReference type="ChEBI" id="CHEBI:15377"/>
        <dbReference type="ChEBI" id="CHEBI:15378"/>
        <dbReference type="ChEBI" id="CHEBI:30616"/>
        <dbReference type="ChEBI" id="CHEBI:43474"/>
        <dbReference type="ChEBI" id="CHEBI:456216"/>
        <dbReference type="EC" id="3.6.4.13"/>
    </reaction>
</comment>
<comment type="subcellular location">
    <subcellularLocation>
        <location evidence="2">Nucleus</location>
    </subcellularLocation>
    <subcellularLocation>
        <location evidence="2">Cytoplasm</location>
    </subcellularLocation>
    <subcellularLocation>
        <location evidence="2">Cytoplasmic granule</location>
    </subcellularLocation>
    <subcellularLocation>
        <location evidence="1">Cytoplasm</location>
        <location evidence="1">Cytosol</location>
    </subcellularLocation>
    <subcellularLocation>
        <location evidence="1">Mitochondrion</location>
    </subcellularLocation>
</comment>
<comment type="domain">
    <text evidence="2">The helicase domain is involved in the stimulation of RELA transcriptional activity.</text>
</comment>
<comment type="similarity">
    <text evidence="6">Belongs to the DEAD box helicase family. DDX1 subfamily.</text>
</comment>
<protein>
    <recommendedName>
        <fullName>ATP-dependent RNA helicase DDX1</fullName>
        <ecNumber>3.6.4.13</ecNumber>
    </recommendedName>
    <alternativeName>
        <fullName>DEAD box protein 1</fullName>
    </alternativeName>
</protein>
<gene>
    <name type="primary">ddx1</name>
</gene>
<proteinExistence type="evidence at transcript level"/>
<organism>
    <name type="scientific">Xenopus laevis</name>
    <name type="common">African clawed frog</name>
    <dbReference type="NCBI Taxonomy" id="8355"/>
    <lineage>
        <taxon>Eukaryota</taxon>
        <taxon>Metazoa</taxon>
        <taxon>Chordata</taxon>
        <taxon>Craniata</taxon>
        <taxon>Vertebrata</taxon>
        <taxon>Euteleostomi</taxon>
        <taxon>Amphibia</taxon>
        <taxon>Batrachia</taxon>
        <taxon>Anura</taxon>
        <taxon>Pipoidea</taxon>
        <taxon>Pipidae</taxon>
        <taxon>Xenopodinae</taxon>
        <taxon>Xenopus</taxon>
        <taxon>Xenopus</taxon>
    </lineage>
</organism>
<sequence length="740" mass="82347">MAAFSEMGVMPEIAQAVEEMDWLLPTDIQAESIPLILGGGDVLMAAETGSGKTGAFSIPVIQIVYETLKDQQEGKKGKASVKTGSTVLNKWQMNPYDRGSAFAIGSDGLCCQSREIKEWHGCRSTRGVNKGKYYYEVSCHDQGLCRVGWSTLSASLDLGTDKFGFGFGGTGKKSHNKQFDNYGEEFTMHDTIGCYLDIDNSIVKFSKNGKDLGLAFQIPSHMKNQAFFTSCVLKNAELKFNFGEEDFKFPPKDGFVALSKAPDGHVVKSQNTGSAQVSQTKSLPNAPKALIIEPSRELAEQTLNNVKQFKKYVDNPKLRELLIIGGVAAKEQLTILENGVDIVVGTPGRIDDLISTGKLSLSQVRFLVLDEADGLLSQGYSDFINRIYGQIPQITSDGKRLQVIVCSATLHSFDVKKLSEKIMHFPTWVDLKGEDSVPETVHHVVVPVNPKKDKQWEKLAKNHIRTDGVHDKDNTRPGGNSAEVWSEAIKVLKGEYIVRAIKEHKMDQAIIFCRTKLDCDNMEQYFIQQGGGPDKKGHQFSCVCLHSDRKPPERKHNLERFKKCEVRFLICTDVAARGIDIRGVPYVINVTLPDEKQNYVHRIGRVGRAERMGLAISLVASEKEKVWYHVCSSRGKGCYNTRLKEDGGCTIWYNEMQLLSEIEEHLTCTISQVEPDIKVPLDDFDGKVVYGQRRATGGGLYKGHVDILAPTVQELASLEKEAQTSFLHLGYLSNQLFRSF</sequence>
<keyword id="KW-0010">Activator</keyword>
<keyword id="KW-0067">ATP-binding</keyword>
<keyword id="KW-0963">Cytoplasm</keyword>
<keyword id="KW-0238">DNA-binding</keyword>
<keyword id="KW-0269">Exonuclease</keyword>
<keyword id="KW-0347">Helicase</keyword>
<keyword id="KW-0378">Hydrolase</keyword>
<keyword id="KW-0496">Mitochondrion</keyword>
<keyword id="KW-0507">mRNA processing</keyword>
<keyword id="KW-0540">Nuclease</keyword>
<keyword id="KW-0547">Nucleotide-binding</keyword>
<keyword id="KW-0539">Nucleus</keyword>
<keyword id="KW-1185">Reference proteome</keyword>
<keyword id="KW-0694">RNA-binding</keyword>
<keyword id="KW-0804">Transcription</keyword>
<keyword id="KW-0805">Transcription regulation</keyword>
<keyword id="KW-0819">tRNA processing</keyword>